<protein>
    <recommendedName>
        <fullName>Desmoglein-1-alpha</fullName>
        <shortName>Desmoglein-1</shortName>
        <shortName>Dsg1-alpha</shortName>
    </recommendedName>
    <alternativeName>
        <fullName>DG1</fullName>
    </alternativeName>
    <alternativeName>
        <fullName>DGI</fullName>
    </alternativeName>
    <alternativeName>
        <fullName>Desmosomal glycoprotein I</fullName>
    </alternativeName>
</protein>
<sequence>MDWHSFRIAALLLTSLVVLEVNSEFQIQVRDHNAKNGTIKWHSIRRQKREWIKFAAACREGEDNSKRNPIAKIHSDCAANQPVTYRISGVGIDQPPYGIFIINQKTGEINITSIVDREVTPFFIIYCRALNAQGQDLENPLELRVRVMDINDNPPVFSMTTFLGQIEENSNANTLVMKLNATDADEPNNLNSMIAFKIIRQEPSDSPMFIINRKTGEIRTMNNFLDREQYSQYSLVVRGSDRDGGADGMSAESECSITILDVNDNIPYLEQSSYDITIEENALHSQLVQIRVIDLDEEFSDNWKAIIFFISGNEGNWFEIEMNERTNVGTLKVVKPLDYEAMKNLQLSIGVRNVAEFHQSIISQYRLTATMVTVTVLNVIEGSVFRPGSKTFVVDSRMEANHRVGEFVATDLDTGRASTNVRYEMGNNPENLLVVDSRTGIITLRNRVTMEQYQRLNGEYKGTVLSIDDSLQRTCTGTIVIELSGTGWVTGSESGGSSSGSGDDRDRVTNGYQGTSSTENPQRVTGSWGGSGIDGTRPNTNPFQGDPDETLETPLYGDNVHFGPAGIGLLIMGFLVLGLVPFLLICCDCGGAPGGGAGFEPVPECSDGAIHTWAVEGPQPEPHEGITTICVPQMPPGNANVIEYIDNSGVYTNEYCGREMQDLGGGERTTGFELMDGVKTSAAPEICQEYSGTLRRNSMRECRDGGLNMNFMESYFCQKAYAYADEDEGRPSNDCLLIYDIEGVGSPAGSVGCCSFIGEDLDESFLDTLGPKFKKLADISLGKEIDSYPDSDPSWPPQSTEPMCPQHTEPLGSGHPPISPHFGTTTVISENAYHSGPGVQHPVPIPDPLGYGNVTVRESYTTSGTLKPSVHFHDNQQASNVVVTERVVGPISGADLHGMLEIPDLRGGANVIVTERVIAPGSSLPTSLTIPNPQETSNVVVTERVIQPTSGMIGNLSMTPELSSAHNVIVTERVVSGAGMSEIAGTAGLGGVGGIGSSGLVSTTMGASGTGLNMGGTATIGHMRSSSDHHFSQTVGSASPSMARSRITKYNTVQYSK</sequence>
<name>DSG1A_MOUSE</name>
<gene>
    <name type="primary">Dsg1a</name>
    <name type="synonym">Dsg1</name>
</gene>
<proteinExistence type="evidence at transcript level"/>
<evidence type="ECO:0000250" key="1"/>
<evidence type="ECO:0000250" key="2">
    <source>
        <dbReference type="UniProtKB" id="Q02413"/>
    </source>
</evidence>
<evidence type="ECO:0000250" key="3">
    <source>
        <dbReference type="UniProtKB" id="Q7TSF1"/>
    </source>
</evidence>
<evidence type="ECO:0000255" key="4"/>
<evidence type="ECO:0000255" key="5">
    <source>
        <dbReference type="PROSITE-ProRule" id="PRU00043"/>
    </source>
</evidence>
<evidence type="ECO:0000256" key="6">
    <source>
        <dbReference type="SAM" id="MobiDB-lite"/>
    </source>
</evidence>
<evidence type="ECO:0000269" key="7">
    <source>
    </source>
</evidence>
<evidence type="ECO:0000305" key="8"/>
<organism>
    <name type="scientific">Mus musculus</name>
    <name type="common">Mouse</name>
    <dbReference type="NCBI Taxonomy" id="10090"/>
    <lineage>
        <taxon>Eukaryota</taxon>
        <taxon>Metazoa</taxon>
        <taxon>Chordata</taxon>
        <taxon>Craniata</taxon>
        <taxon>Vertebrata</taxon>
        <taxon>Euteleostomi</taxon>
        <taxon>Mammalia</taxon>
        <taxon>Eutheria</taxon>
        <taxon>Euarchontoglires</taxon>
        <taxon>Glires</taxon>
        <taxon>Rodentia</taxon>
        <taxon>Myomorpha</taxon>
        <taxon>Muroidea</taxon>
        <taxon>Muridae</taxon>
        <taxon>Murinae</taxon>
        <taxon>Mus</taxon>
        <taxon>Mus</taxon>
    </lineage>
</organism>
<comment type="function">
    <text evidence="2 3">Component of intercellular desmosome junctions (By similarity). Involved in the interaction of plaque proteins and intermediate filaments mediating cell-cell adhesion (By similarity).</text>
</comment>
<comment type="subunit">
    <text evidence="2">Binds to JUP/plakoglobin (By similarity). Interacts with PKP2 (By similarity). Interacts with DSC3; there is evidence to suggest that the interaction promotes cell-cell adhesion of keratinocytes (By similarity).</text>
</comment>
<comment type="subcellular location">
    <subcellularLocation>
        <location evidence="3">Cell membrane</location>
        <topology evidence="3">Single-pass type I membrane protein</topology>
    </subcellularLocation>
    <subcellularLocation>
        <location evidence="3">Cell junction</location>
        <location evidence="3">Desmosome</location>
    </subcellularLocation>
    <subcellularLocation>
        <location evidence="2">Cytoplasm</location>
    </subcellularLocation>
    <subcellularLocation>
        <location evidence="2">Nucleus</location>
    </subcellularLocation>
</comment>
<comment type="tissue specificity">
    <text evidence="7">Expressed in testis.</text>
</comment>
<comment type="developmental stage">
    <text evidence="7">Expressed in embryo at 17 dpc.</text>
</comment>
<comment type="domain">
    <text evidence="1">Three calcium ions are usually bound at the interface of each cadherin domain and rigidify the connections, imparting a strong curvature to the full-length ectodomain.</text>
</comment>
<comment type="sequence caution" evidence="8">
    <conflict type="frameshift">
        <sequence resource="EMBL-CDS" id="BAC26378"/>
    </conflict>
</comment>
<keyword id="KW-0106">Calcium</keyword>
<keyword id="KW-0130">Cell adhesion</keyword>
<keyword id="KW-0965">Cell junction</keyword>
<keyword id="KW-1003">Cell membrane</keyword>
<keyword id="KW-0165">Cleavage on pair of basic residues</keyword>
<keyword id="KW-0963">Cytoplasm</keyword>
<keyword id="KW-0325">Glycoprotein</keyword>
<keyword id="KW-0472">Membrane</keyword>
<keyword id="KW-0479">Metal-binding</keyword>
<keyword id="KW-0539">Nucleus</keyword>
<keyword id="KW-1185">Reference proteome</keyword>
<keyword id="KW-0677">Repeat</keyword>
<keyword id="KW-0732">Signal</keyword>
<keyword id="KW-0812">Transmembrane</keyword>
<keyword id="KW-1133">Transmembrane helix</keyword>
<dbReference type="EMBL" id="BC154410">
    <property type="protein sequence ID" value="AAI54411.1"/>
    <property type="molecule type" value="mRNA"/>
</dbReference>
<dbReference type="EMBL" id="AK029294">
    <property type="protein sequence ID" value="BAC26378.1"/>
    <property type="status" value="ALT_FRAME"/>
    <property type="molecule type" value="mRNA"/>
</dbReference>
<dbReference type="EMBL" id="X74335">
    <property type="protein sequence ID" value="CAA52382.1"/>
    <property type="molecule type" value="mRNA"/>
</dbReference>
<dbReference type="CCDS" id="CCDS50231.1"/>
<dbReference type="PIR" id="B54742">
    <property type="entry name" value="B54742"/>
</dbReference>
<dbReference type="RefSeq" id="NP_034209.2">
    <property type="nucleotide sequence ID" value="NM_010079.2"/>
</dbReference>
<dbReference type="SMR" id="Q61495"/>
<dbReference type="BioGRID" id="199323">
    <property type="interactions" value="11"/>
</dbReference>
<dbReference type="FunCoup" id="Q61495">
    <property type="interactions" value="240"/>
</dbReference>
<dbReference type="IntAct" id="Q61495">
    <property type="interactions" value="4"/>
</dbReference>
<dbReference type="MINT" id="Q61495"/>
<dbReference type="STRING" id="10090.ENSMUSP00000076393"/>
<dbReference type="GlyCosmos" id="Q61495">
    <property type="glycosylation" value="2 sites, No reported glycans"/>
</dbReference>
<dbReference type="GlyGen" id="Q61495">
    <property type="glycosylation" value="4 sites, 1 N-linked glycan (1 site), 1 O-linked glycan (1 site)"/>
</dbReference>
<dbReference type="iPTMnet" id="Q61495"/>
<dbReference type="PhosphoSitePlus" id="Q61495"/>
<dbReference type="SwissPalm" id="Q61495"/>
<dbReference type="PaxDb" id="10090-ENSMUSP00000076393"/>
<dbReference type="ProteomicsDB" id="277504"/>
<dbReference type="DNASU" id="13510"/>
<dbReference type="Ensembl" id="ENSMUST00000077146.4">
    <property type="protein sequence ID" value="ENSMUSP00000076393.4"/>
    <property type="gene ID" value="ENSMUSG00000069441.4"/>
</dbReference>
<dbReference type="GeneID" id="13510"/>
<dbReference type="KEGG" id="mmu:13510"/>
<dbReference type="UCSC" id="uc008eel.2">
    <property type="organism name" value="mouse"/>
</dbReference>
<dbReference type="AGR" id="MGI:94930"/>
<dbReference type="CTD" id="13510"/>
<dbReference type="MGI" id="MGI:94930">
    <property type="gene designation" value="Dsg1a"/>
</dbReference>
<dbReference type="VEuPathDB" id="HostDB:ENSMUSG00000069441"/>
<dbReference type="eggNOG" id="KOG3594">
    <property type="taxonomic scope" value="Eukaryota"/>
</dbReference>
<dbReference type="GeneTree" id="ENSGT01030000234624"/>
<dbReference type="HOGENOM" id="CLU_005284_0_0_1"/>
<dbReference type="InParanoid" id="Q61495"/>
<dbReference type="OMA" id="VTKEQYN"/>
<dbReference type="OrthoDB" id="8961010at2759"/>
<dbReference type="PhylomeDB" id="Q61495"/>
<dbReference type="TreeFam" id="TF331809"/>
<dbReference type="Reactome" id="R-MMU-351906">
    <property type="pathway name" value="Apoptotic cleavage of cell adhesion proteins"/>
</dbReference>
<dbReference type="Reactome" id="R-MMU-6798695">
    <property type="pathway name" value="Neutrophil degranulation"/>
</dbReference>
<dbReference type="Reactome" id="R-MMU-6805567">
    <property type="pathway name" value="Keratinization"/>
</dbReference>
<dbReference type="Reactome" id="R-MMU-6809371">
    <property type="pathway name" value="Formation of the cornified envelope"/>
</dbReference>
<dbReference type="Reactome" id="R-MMU-9696264">
    <property type="pathway name" value="RND3 GTPase cycle"/>
</dbReference>
<dbReference type="Reactome" id="R-MMU-9696270">
    <property type="pathway name" value="RND2 GTPase cycle"/>
</dbReference>
<dbReference type="BioGRID-ORCS" id="13510">
    <property type="hits" value="5 hits in 81 CRISPR screens"/>
</dbReference>
<dbReference type="ChiTaRS" id="Dsg1a">
    <property type="organism name" value="mouse"/>
</dbReference>
<dbReference type="PRO" id="PR:Q61495"/>
<dbReference type="Proteomes" id="UP000000589">
    <property type="component" value="Chromosome 18"/>
</dbReference>
<dbReference type="RNAct" id="Q61495">
    <property type="molecule type" value="protein"/>
</dbReference>
<dbReference type="Bgee" id="ENSMUSG00000069441">
    <property type="expression patterns" value="Expressed in tail skin and 56 other cell types or tissues"/>
</dbReference>
<dbReference type="GO" id="GO:0005737">
    <property type="term" value="C:cytoplasm"/>
    <property type="evidence" value="ECO:0007669"/>
    <property type="project" value="UniProtKB-SubCell"/>
</dbReference>
<dbReference type="GO" id="GO:0030057">
    <property type="term" value="C:desmosome"/>
    <property type="evidence" value="ECO:0000314"/>
    <property type="project" value="MGI"/>
</dbReference>
<dbReference type="GO" id="GO:0005634">
    <property type="term" value="C:nucleus"/>
    <property type="evidence" value="ECO:0007669"/>
    <property type="project" value="UniProtKB-SubCell"/>
</dbReference>
<dbReference type="GO" id="GO:0005886">
    <property type="term" value="C:plasma membrane"/>
    <property type="evidence" value="ECO:0000314"/>
    <property type="project" value="MGI"/>
</dbReference>
<dbReference type="GO" id="GO:0005509">
    <property type="term" value="F:calcium ion binding"/>
    <property type="evidence" value="ECO:0007669"/>
    <property type="project" value="InterPro"/>
</dbReference>
<dbReference type="GO" id="GO:0007156">
    <property type="term" value="P:homophilic cell adhesion via plasma membrane adhesion molecules"/>
    <property type="evidence" value="ECO:0007669"/>
    <property type="project" value="InterPro"/>
</dbReference>
<dbReference type="CDD" id="cd11304">
    <property type="entry name" value="Cadherin_repeat"/>
    <property type="match status" value="4"/>
</dbReference>
<dbReference type="FunFam" id="2.60.40.60:FF:000011">
    <property type="entry name" value="Cadherin 1"/>
    <property type="match status" value="1"/>
</dbReference>
<dbReference type="FunFam" id="2.60.40.60:FF:000068">
    <property type="entry name" value="Desmoglein 1"/>
    <property type="match status" value="1"/>
</dbReference>
<dbReference type="FunFam" id="2.60.40.60:FF:000083">
    <property type="entry name" value="Desmoglein 1"/>
    <property type="match status" value="1"/>
</dbReference>
<dbReference type="FunFam" id="2.60.40.60:FF:000238">
    <property type="entry name" value="Desmoglein 1"/>
    <property type="match status" value="1"/>
</dbReference>
<dbReference type="FunFam" id="4.10.900.10:FF:000003">
    <property type="entry name" value="Desmoglein 1"/>
    <property type="match status" value="1"/>
</dbReference>
<dbReference type="Gene3D" id="2.60.40.60">
    <property type="entry name" value="Cadherins"/>
    <property type="match status" value="4"/>
</dbReference>
<dbReference type="Gene3D" id="4.10.900.10">
    <property type="entry name" value="TCF3-CBD (Catenin binding domain)"/>
    <property type="match status" value="1"/>
</dbReference>
<dbReference type="InterPro" id="IPR050971">
    <property type="entry name" value="Cadherin-domain_protein"/>
</dbReference>
<dbReference type="InterPro" id="IPR002126">
    <property type="entry name" value="Cadherin-like_dom"/>
</dbReference>
<dbReference type="InterPro" id="IPR015919">
    <property type="entry name" value="Cadherin-like_sf"/>
</dbReference>
<dbReference type="InterPro" id="IPR020894">
    <property type="entry name" value="Cadherin_CS"/>
</dbReference>
<dbReference type="InterPro" id="IPR000233">
    <property type="entry name" value="Cadherin_Y-type_LIR"/>
</dbReference>
<dbReference type="InterPro" id="IPR027397">
    <property type="entry name" value="Catenin-bd_sf"/>
</dbReference>
<dbReference type="InterPro" id="IPR009122">
    <property type="entry name" value="Desmosomal_cadherin"/>
</dbReference>
<dbReference type="PANTHER" id="PTHR24025">
    <property type="entry name" value="DESMOGLEIN FAMILY MEMBER"/>
    <property type="match status" value="1"/>
</dbReference>
<dbReference type="PANTHER" id="PTHR24025:SF9">
    <property type="entry name" value="DESMOGLEIN-1"/>
    <property type="match status" value="1"/>
</dbReference>
<dbReference type="Pfam" id="PF01049">
    <property type="entry name" value="CADH_Y-type_LIR"/>
    <property type="match status" value="1"/>
</dbReference>
<dbReference type="Pfam" id="PF00028">
    <property type="entry name" value="Cadherin"/>
    <property type="match status" value="3"/>
</dbReference>
<dbReference type="PRINTS" id="PR00205">
    <property type="entry name" value="CADHERIN"/>
</dbReference>
<dbReference type="PRINTS" id="PR01818">
    <property type="entry name" value="DESMOCADHERN"/>
</dbReference>
<dbReference type="PRINTS" id="PR01819">
    <property type="entry name" value="DESMOGLEIN"/>
</dbReference>
<dbReference type="SMART" id="SM00112">
    <property type="entry name" value="CA"/>
    <property type="match status" value="4"/>
</dbReference>
<dbReference type="SUPFAM" id="SSF49313">
    <property type="entry name" value="Cadherin-like"/>
    <property type="match status" value="4"/>
</dbReference>
<dbReference type="PROSITE" id="PS00232">
    <property type="entry name" value="CADHERIN_1"/>
    <property type="match status" value="2"/>
</dbReference>
<dbReference type="PROSITE" id="PS50268">
    <property type="entry name" value="CADHERIN_2"/>
    <property type="match status" value="4"/>
</dbReference>
<reference key="1">
    <citation type="journal article" date="2002" name="Exp. Dermatol.">
        <title>Interspecies conservation and differential expression of mouse desmoglein gene family.</title>
        <authorList>
            <person name="Mahoney M.G."/>
            <person name="Simpson A."/>
            <person name="Aho S."/>
            <person name="Uitto J."/>
            <person name="Pulkkinen L."/>
        </authorList>
    </citation>
    <scope>NUCLEOTIDE SEQUENCE [MRNA]</scope>
    <source>
        <strain>C57BL/6J</strain>
        <tissue>Keratinocyte</tissue>
    </source>
</reference>
<reference key="2">
    <citation type="journal article" date="2004" name="Genome Res.">
        <title>The status, quality, and expansion of the NIH full-length cDNA project: the Mammalian Gene Collection (MGC).</title>
        <authorList>
            <consortium name="The MGC Project Team"/>
        </authorList>
    </citation>
    <scope>NUCLEOTIDE SEQUENCE [LARGE SCALE MRNA]</scope>
</reference>
<reference key="3">
    <citation type="journal article" date="2005" name="Science">
        <title>The transcriptional landscape of the mammalian genome.</title>
        <authorList>
            <person name="Carninci P."/>
            <person name="Kasukawa T."/>
            <person name="Katayama S."/>
            <person name="Gough J."/>
            <person name="Frith M.C."/>
            <person name="Maeda N."/>
            <person name="Oyama R."/>
            <person name="Ravasi T."/>
            <person name="Lenhard B."/>
            <person name="Wells C."/>
            <person name="Kodzius R."/>
            <person name="Shimokawa K."/>
            <person name="Bajic V.B."/>
            <person name="Brenner S.E."/>
            <person name="Batalov S."/>
            <person name="Forrest A.R."/>
            <person name="Zavolan M."/>
            <person name="Davis M.J."/>
            <person name="Wilming L.G."/>
            <person name="Aidinis V."/>
            <person name="Allen J.E."/>
            <person name="Ambesi-Impiombato A."/>
            <person name="Apweiler R."/>
            <person name="Aturaliya R.N."/>
            <person name="Bailey T.L."/>
            <person name="Bansal M."/>
            <person name="Baxter L."/>
            <person name="Beisel K.W."/>
            <person name="Bersano T."/>
            <person name="Bono H."/>
            <person name="Chalk A.M."/>
            <person name="Chiu K.P."/>
            <person name="Choudhary V."/>
            <person name="Christoffels A."/>
            <person name="Clutterbuck D.R."/>
            <person name="Crowe M.L."/>
            <person name="Dalla E."/>
            <person name="Dalrymple B.P."/>
            <person name="de Bono B."/>
            <person name="Della Gatta G."/>
            <person name="di Bernardo D."/>
            <person name="Down T."/>
            <person name="Engstrom P."/>
            <person name="Fagiolini M."/>
            <person name="Faulkner G."/>
            <person name="Fletcher C.F."/>
            <person name="Fukushima T."/>
            <person name="Furuno M."/>
            <person name="Futaki S."/>
            <person name="Gariboldi M."/>
            <person name="Georgii-Hemming P."/>
            <person name="Gingeras T.R."/>
            <person name="Gojobori T."/>
            <person name="Green R.E."/>
            <person name="Gustincich S."/>
            <person name="Harbers M."/>
            <person name="Hayashi Y."/>
            <person name="Hensch T.K."/>
            <person name="Hirokawa N."/>
            <person name="Hill D."/>
            <person name="Huminiecki L."/>
            <person name="Iacono M."/>
            <person name="Ikeo K."/>
            <person name="Iwama A."/>
            <person name="Ishikawa T."/>
            <person name="Jakt M."/>
            <person name="Kanapin A."/>
            <person name="Katoh M."/>
            <person name="Kawasawa Y."/>
            <person name="Kelso J."/>
            <person name="Kitamura H."/>
            <person name="Kitano H."/>
            <person name="Kollias G."/>
            <person name="Krishnan S.P."/>
            <person name="Kruger A."/>
            <person name="Kummerfeld S.K."/>
            <person name="Kurochkin I.V."/>
            <person name="Lareau L.F."/>
            <person name="Lazarevic D."/>
            <person name="Lipovich L."/>
            <person name="Liu J."/>
            <person name="Liuni S."/>
            <person name="McWilliam S."/>
            <person name="Madan Babu M."/>
            <person name="Madera M."/>
            <person name="Marchionni L."/>
            <person name="Matsuda H."/>
            <person name="Matsuzawa S."/>
            <person name="Miki H."/>
            <person name="Mignone F."/>
            <person name="Miyake S."/>
            <person name="Morris K."/>
            <person name="Mottagui-Tabar S."/>
            <person name="Mulder N."/>
            <person name="Nakano N."/>
            <person name="Nakauchi H."/>
            <person name="Ng P."/>
            <person name="Nilsson R."/>
            <person name="Nishiguchi S."/>
            <person name="Nishikawa S."/>
            <person name="Nori F."/>
            <person name="Ohara O."/>
            <person name="Okazaki Y."/>
            <person name="Orlando V."/>
            <person name="Pang K.C."/>
            <person name="Pavan W.J."/>
            <person name="Pavesi G."/>
            <person name="Pesole G."/>
            <person name="Petrovsky N."/>
            <person name="Piazza S."/>
            <person name="Reed J."/>
            <person name="Reid J.F."/>
            <person name="Ring B.Z."/>
            <person name="Ringwald M."/>
            <person name="Rost B."/>
            <person name="Ruan Y."/>
            <person name="Salzberg S.L."/>
            <person name="Sandelin A."/>
            <person name="Schneider C."/>
            <person name="Schoenbach C."/>
            <person name="Sekiguchi K."/>
            <person name="Semple C.A."/>
            <person name="Seno S."/>
            <person name="Sessa L."/>
            <person name="Sheng Y."/>
            <person name="Shibata Y."/>
            <person name="Shimada H."/>
            <person name="Shimada K."/>
            <person name="Silva D."/>
            <person name="Sinclair B."/>
            <person name="Sperling S."/>
            <person name="Stupka E."/>
            <person name="Sugiura K."/>
            <person name="Sultana R."/>
            <person name="Takenaka Y."/>
            <person name="Taki K."/>
            <person name="Tammoja K."/>
            <person name="Tan S.L."/>
            <person name="Tang S."/>
            <person name="Taylor M.S."/>
            <person name="Tegner J."/>
            <person name="Teichmann S.A."/>
            <person name="Ueda H.R."/>
            <person name="van Nimwegen E."/>
            <person name="Verardo R."/>
            <person name="Wei C.L."/>
            <person name="Yagi K."/>
            <person name="Yamanishi H."/>
            <person name="Zabarovsky E."/>
            <person name="Zhu S."/>
            <person name="Zimmer A."/>
            <person name="Hide W."/>
            <person name="Bult C."/>
            <person name="Grimmond S.M."/>
            <person name="Teasdale R.D."/>
            <person name="Liu E.T."/>
            <person name="Brusic V."/>
            <person name="Quackenbush J."/>
            <person name="Wahlestedt C."/>
            <person name="Mattick J.S."/>
            <person name="Hume D.A."/>
            <person name="Kai C."/>
            <person name="Sasaki D."/>
            <person name="Tomaru Y."/>
            <person name="Fukuda S."/>
            <person name="Kanamori-Katayama M."/>
            <person name="Suzuki M."/>
            <person name="Aoki J."/>
            <person name="Arakawa T."/>
            <person name="Iida J."/>
            <person name="Imamura K."/>
            <person name="Itoh M."/>
            <person name="Kato T."/>
            <person name="Kawaji H."/>
            <person name="Kawagashira N."/>
            <person name="Kawashima T."/>
            <person name="Kojima M."/>
            <person name="Kondo S."/>
            <person name="Konno H."/>
            <person name="Nakano K."/>
            <person name="Ninomiya N."/>
            <person name="Nishio T."/>
            <person name="Okada M."/>
            <person name="Plessy C."/>
            <person name="Shibata K."/>
            <person name="Shiraki T."/>
            <person name="Suzuki S."/>
            <person name="Tagami M."/>
            <person name="Waki K."/>
            <person name="Watahiki A."/>
            <person name="Okamura-Oho Y."/>
            <person name="Suzuki H."/>
            <person name="Kawai J."/>
            <person name="Hayashizaki Y."/>
        </authorList>
    </citation>
    <scope>NUCLEOTIDE SEQUENCE [LARGE SCALE MRNA] OF 734-1057</scope>
    <source>
        <strain>C57BL/6J</strain>
        <tissue>Head</tissue>
    </source>
</reference>
<reference key="4">
    <citation type="journal article" date="1994" name="Genomics">
        <title>Mouse desmocollin (Dsc3) and desmoglein (Dsg1) genes are closely linked in the proximal region of chromosome 18.</title>
        <authorList>
            <person name="Buxton R.S."/>
            <person name="Wheeler G.N."/>
            <person name="Pidsley S.C."/>
            <person name="Marsden M.D."/>
            <person name="Adams M.J."/>
            <person name="Jenkins N.A."/>
            <person name="Gilbert D.J."/>
            <person name="Copeland N.G."/>
        </authorList>
    </citation>
    <scope>NUCLEOTIDE SEQUENCE [MRNA] OF 748-974</scope>
</reference>
<reference key="5">
    <citation type="journal article" date="2003" name="Exp. Dermatol.">
        <title>Novel member of the mouse desmoglein gene family: Dsg1-beta.</title>
        <authorList>
            <person name="Pulkkinen L."/>
            <person name="Choi Y.W."/>
            <person name="Kljuic A."/>
            <person name="Uitto J."/>
            <person name="Mahoney M.G."/>
        </authorList>
    </citation>
    <scope>TISSUE SPECIFICITY</scope>
    <scope>DEVELOPMENTAL STAGE</scope>
</reference>
<accession>Q61495</accession>
<accession>A8WFQ4</accession>
<accession>Q8CE03</accession>
<feature type="signal peptide" evidence="4">
    <location>
        <begin position="1"/>
        <end position="23"/>
    </location>
</feature>
<feature type="propeptide" id="PRO_0000003839" evidence="4">
    <location>
        <begin position="24"/>
        <end position="49"/>
    </location>
</feature>
<feature type="chain" id="PRO_0000003840" description="Desmoglein-1-alpha">
    <location>
        <begin position="50"/>
        <end position="1057"/>
    </location>
</feature>
<feature type="topological domain" description="Extracellular" evidence="4">
    <location>
        <begin position="50"/>
        <end position="564"/>
    </location>
</feature>
<feature type="transmembrane region" description="Helical" evidence="4">
    <location>
        <begin position="565"/>
        <end position="585"/>
    </location>
</feature>
<feature type="topological domain" description="Cytoplasmic" evidence="4">
    <location>
        <begin position="586"/>
        <end position="1057"/>
    </location>
</feature>
<feature type="domain" description="Cadherin 1" evidence="5">
    <location>
        <begin position="50"/>
        <end position="157"/>
    </location>
</feature>
<feature type="domain" description="Cadherin 2" evidence="5">
    <location>
        <begin position="158"/>
        <end position="269"/>
    </location>
</feature>
<feature type="domain" description="Cadherin 3" evidence="5">
    <location>
        <begin position="270"/>
        <end position="389"/>
    </location>
</feature>
<feature type="domain" description="Cadherin 4" evidence="5">
    <location>
        <begin position="386"/>
        <end position="493"/>
    </location>
</feature>
<feature type="repeat" description="Desmoglein repeat 1">
    <location>
        <begin position="832"/>
        <end position="858"/>
    </location>
</feature>
<feature type="repeat" description="Desmoglein repeat 2">
    <location>
        <begin position="859"/>
        <end position="888"/>
    </location>
</feature>
<feature type="repeat" description="Desmoglein repeat 3">
    <location>
        <begin position="889"/>
        <end position="918"/>
    </location>
</feature>
<feature type="repeat" description="Desmoglein repeat 4">
    <location>
        <begin position="919"/>
        <end position="946"/>
    </location>
</feature>
<feature type="repeat" description="Desmoglein repeat 5">
    <location>
        <begin position="947"/>
        <end position="975"/>
    </location>
</feature>
<feature type="region of interest" description="Disordered" evidence="6">
    <location>
        <begin position="490"/>
        <end position="552"/>
    </location>
</feature>
<feature type="compositionally biased region" description="Polar residues" evidence="6">
    <location>
        <begin position="510"/>
        <end position="525"/>
    </location>
</feature>
<feature type="glycosylation site" description="N-linked (GlcNAc...) asparagine" evidence="4">
    <location>
        <position position="110"/>
    </location>
</feature>
<feature type="glycosylation site" description="N-linked (GlcNAc...) asparagine" evidence="4">
    <location>
        <position position="180"/>
    </location>
</feature>
<feature type="sequence conflict" description="In Ref. 4; CAA52382." evidence="8" ref="4">
    <original>GS</original>
    <variation>EG</variation>
    <location>
        <begin position="749"/>
        <end position="750"/>
    </location>
</feature>